<accession>Q5E2Q0</accession>
<keyword id="KW-0131">Cell cycle</keyword>
<keyword id="KW-0132">Cell division</keyword>
<keyword id="KW-0997">Cell inner membrane</keyword>
<keyword id="KW-1003">Cell membrane</keyword>
<keyword id="KW-0133">Cell shape</keyword>
<keyword id="KW-0961">Cell wall biogenesis/degradation</keyword>
<keyword id="KW-0328">Glycosyltransferase</keyword>
<keyword id="KW-0472">Membrane</keyword>
<keyword id="KW-0573">Peptidoglycan synthesis</keyword>
<keyword id="KW-1185">Reference proteome</keyword>
<keyword id="KW-0808">Transferase</keyword>
<gene>
    <name evidence="1" type="primary">murG</name>
    <name type="ordered locus">VF_2201</name>
</gene>
<evidence type="ECO:0000255" key="1">
    <source>
        <dbReference type="HAMAP-Rule" id="MF_00033"/>
    </source>
</evidence>
<organism>
    <name type="scientific">Aliivibrio fischeri (strain ATCC 700601 / ES114)</name>
    <name type="common">Vibrio fischeri</name>
    <dbReference type="NCBI Taxonomy" id="312309"/>
    <lineage>
        <taxon>Bacteria</taxon>
        <taxon>Pseudomonadati</taxon>
        <taxon>Pseudomonadota</taxon>
        <taxon>Gammaproteobacteria</taxon>
        <taxon>Vibrionales</taxon>
        <taxon>Vibrionaceae</taxon>
        <taxon>Aliivibrio</taxon>
    </lineage>
</organism>
<name>MURG_ALIF1</name>
<comment type="function">
    <text evidence="1">Cell wall formation. Catalyzes the transfer of a GlcNAc subunit on undecaprenyl-pyrophosphoryl-MurNAc-pentapeptide (lipid intermediate I) to form undecaprenyl-pyrophosphoryl-MurNAc-(pentapeptide)GlcNAc (lipid intermediate II).</text>
</comment>
<comment type="catalytic activity">
    <reaction evidence="1">
        <text>di-trans,octa-cis-undecaprenyl diphospho-N-acetyl-alpha-D-muramoyl-L-alanyl-D-glutamyl-meso-2,6-diaminopimeloyl-D-alanyl-D-alanine + UDP-N-acetyl-alpha-D-glucosamine = di-trans,octa-cis-undecaprenyl diphospho-[N-acetyl-alpha-D-glucosaminyl-(1-&gt;4)]-N-acetyl-alpha-D-muramoyl-L-alanyl-D-glutamyl-meso-2,6-diaminopimeloyl-D-alanyl-D-alanine + UDP + H(+)</text>
        <dbReference type="Rhea" id="RHEA:31227"/>
        <dbReference type="ChEBI" id="CHEBI:15378"/>
        <dbReference type="ChEBI" id="CHEBI:57705"/>
        <dbReference type="ChEBI" id="CHEBI:58223"/>
        <dbReference type="ChEBI" id="CHEBI:61387"/>
        <dbReference type="ChEBI" id="CHEBI:61388"/>
        <dbReference type="EC" id="2.4.1.227"/>
    </reaction>
</comment>
<comment type="pathway">
    <text evidence="1">Cell wall biogenesis; peptidoglycan biosynthesis.</text>
</comment>
<comment type="subcellular location">
    <subcellularLocation>
        <location evidence="1">Cell inner membrane</location>
        <topology evidence="1">Peripheral membrane protein</topology>
        <orientation evidence="1">Cytoplasmic side</orientation>
    </subcellularLocation>
</comment>
<comment type="similarity">
    <text evidence="1">Belongs to the glycosyltransferase 28 family. MurG subfamily.</text>
</comment>
<sequence length="354" mass="38173">MKNKNKRLLVMAGGTGGHVFPGLAVAKQLQSEGWEIRWLGTADRMEADLVPKHGIEIDFIKVKGLRGQGLKKLIAAPFQILGAISQAKKHIKAWQPDVVLGMGGYVSGPGGIAAWLSGIPVVLHEQNAVAGLTNQWLSKIAKRVFQAFPGAFPNAEVVGNPVREDVCQLPHPKERFAQRTGPIRLLVMGGSQGARILNTTLPEALPQLSHEIEIWHQAGKGSQETVEQAYRDNGIADAKVTEFIDNVAEAYAWADLLVCRSGALTVSEVSAAGVGSIFIPFMHKDRQQALNADHLVQCGAAQMIEQQDLTVQGLVDTLNGLERKQLLEMACNARDAAIIDADVRVANAIKSLAK</sequence>
<feature type="chain" id="PRO_0000109235" description="UDP-N-acetylglucosamine--N-acetylmuramyl-(pentapeptide) pyrophosphoryl-undecaprenol N-acetylglucosamine transferase">
    <location>
        <begin position="1"/>
        <end position="354"/>
    </location>
</feature>
<feature type="binding site" evidence="1">
    <location>
        <begin position="15"/>
        <end position="17"/>
    </location>
    <ligand>
        <name>UDP-N-acetyl-alpha-D-glucosamine</name>
        <dbReference type="ChEBI" id="CHEBI:57705"/>
    </ligand>
</feature>
<feature type="binding site" evidence="1">
    <location>
        <position position="127"/>
    </location>
    <ligand>
        <name>UDP-N-acetyl-alpha-D-glucosamine</name>
        <dbReference type="ChEBI" id="CHEBI:57705"/>
    </ligand>
</feature>
<feature type="binding site" evidence="1">
    <location>
        <position position="163"/>
    </location>
    <ligand>
        <name>UDP-N-acetyl-alpha-D-glucosamine</name>
        <dbReference type="ChEBI" id="CHEBI:57705"/>
    </ligand>
</feature>
<feature type="binding site" evidence="1">
    <location>
        <position position="191"/>
    </location>
    <ligand>
        <name>UDP-N-acetyl-alpha-D-glucosamine</name>
        <dbReference type="ChEBI" id="CHEBI:57705"/>
    </ligand>
</feature>
<feature type="binding site" evidence="1">
    <location>
        <position position="244"/>
    </location>
    <ligand>
        <name>UDP-N-acetyl-alpha-D-glucosamine</name>
        <dbReference type="ChEBI" id="CHEBI:57705"/>
    </ligand>
</feature>
<feature type="binding site" evidence="1">
    <location>
        <begin position="263"/>
        <end position="268"/>
    </location>
    <ligand>
        <name>UDP-N-acetyl-alpha-D-glucosamine</name>
        <dbReference type="ChEBI" id="CHEBI:57705"/>
    </ligand>
</feature>
<feature type="binding site" evidence="1">
    <location>
        <position position="288"/>
    </location>
    <ligand>
        <name>UDP-N-acetyl-alpha-D-glucosamine</name>
        <dbReference type="ChEBI" id="CHEBI:57705"/>
    </ligand>
</feature>
<dbReference type="EC" id="2.4.1.227" evidence="1"/>
<dbReference type="EMBL" id="CP000020">
    <property type="protein sequence ID" value="AAW86696.1"/>
    <property type="molecule type" value="Genomic_DNA"/>
</dbReference>
<dbReference type="RefSeq" id="WP_011262632.1">
    <property type="nucleotide sequence ID" value="NC_006840.2"/>
</dbReference>
<dbReference type="RefSeq" id="YP_205584.1">
    <property type="nucleotide sequence ID" value="NC_006840.2"/>
</dbReference>
<dbReference type="SMR" id="Q5E2Q0"/>
<dbReference type="STRING" id="312309.VF_2201"/>
<dbReference type="CAZy" id="GT28">
    <property type="family name" value="Glycosyltransferase Family 28"/>
</dbReference>
<dbReference type="EnsemblBacteria" id="AAW86696">
    <property type="protein sequence ID" value="AAW86696"/>
    <property type="gene ID" value="VF_2201"/>
</dbReference>
<dbReference type="GeneID" id="54164917"/>
<dbReference type="KEGG" id="vfi:VF_2201"/>
<dbReference type="PATRIC" id="fig|312309.11.peg.2240"/>
<dbReference type="eggNOG" id="COG0707">
    <property type="taxonomic scope" value="Bacteria"/>
</dbReference>
<dbReference type="HOGENOM" id="CLU_037404_2_0_6"/>
<dbReference type="OrthoDB" id="9808936at2"/>
<dbReference type="UniPathway" id="UPA00219"/>
<dbReference type="Proteomes" id="UP000000537">
    <property type="component" value="Chromosome I"/>
</dbReference>
<dbReference type="GO" id="GO:0005886">
    <property type="term" value="C:plasma membrane"/>
    <property type="evidence" value="ECO:0007669"/>
    <property type="project" value="UniProtKB-SubCell"/>
</dbReference>
<dbReference type="GO" id="GO:0051991">
    <property type="term" value="F:UDP-N-acetyl-D-glucosamine:N-acetylmuramoyl-L-alanyl-D-glutamyl-meso-2,6-diaminopimelyl-D-alanyl-D-alanine-diphosphoundecaprenol 4-beta-N-acetylglucosaminlytransferase activity"/>
    <property type="evidence" value="ECO:0007669"/>
    <property type="project" value="RHEA"/>
</dbReference>
<dbReference type="GO" id="GO:0050511">
    <property type="term" value="F:undecaprenyldiphospho-muramoylpentapeptide beta-N-acetylglucosaminyltransferase activity"/>
    <property type="evidence" value="ECO:0007669"/>
    <property type="project" value="UniProtKB-UniRule"/>
</dbReference>
<dbReference type="GO" id="GO:0005975">
    <property type="term" value="P:carbohydrate metabolic process"/>
    <property type="evidence" value="ECO:0007669"/>
    <property type="project" value="InterPro"/>
</dbReference>
<dbReference type="GO" id="GO:0051301">
    <property type="term" value="P:cell division"/>
    <property type="evidence" value="ECO:0007669"/>
    <property type="project" value="UniProtKB-KW"/>
</dbReference>
<dbReference type="GO" id="GO:0071555">
    <property type="term" value="P:cell wall organization"/>
    <property type="evidence" value="ECO:0007669"/>
    <property type="project" value="UniProtKB-KW"/>
</dbReference>
<dbReference type="GO" id="GO:0030259">
    <property type="term" value="P:lipid glycosylation"/>
    <property type="evidence" value="ECO:0007669"/>
    <property type="project" value="UniProtKB-UniRule"/>
</dbReference>
<dbReference type="GO" id="GO:0009252">
    <property type="term" value="P:peptidoglycan biosynthetic process"/>
    <property type="evidence" value="ECO:0007669"/>
    <property type="project" value="UniProtKB-UniRule"/>
</dbReference>
<dbReference type="GO" id="GO:0008360">
    <property type="term" value="P:regulation of cell shape"/>
    <property type="evidence" value="ECO:0007669"/>
    <property type="project" value="UniProtKB-KW"/>
</dbReference>
<dbReference type="CDD" id="cd03785">
    <property type="entry name" value="GT28_MurG"/>
    <property type="match status" value="1"/>
</dbReference>
<dbReference type="Gene3D" id="3.40.50.2000">
    <property type="entry name" value="Glycogen Phosphorylase B"/>
    <property type="match status" value="2"/>
</dbReference>
<dbReference type="HAMAP" id="MF_00033">
    <property type="entry name" value="MurG"/>
    <property type="match status" value="1"/>
</dbReference>
<dbReference type="InterPro" id="IPR006009">
    <property type="entry name" value="GlcNAc_MurG"/>
</dbReference>
<dbReference type="InterPro" id="IPR007235">
    <property type="entry name" value="Glyco_trans_28_C"/>
</dbReference>
<dbReference type="InterPro" id="IPR004276">
    <property type="entry name" value="GlycoTrans_28_N"/>
</dbReference>
<dbReference type="NCBIfam" id="TIGR01133">
    <property type="entry name" value="murG"/>
    <property type="match status" value="1"/>
</dbReference>
<dbReference type="PANTHER" id="PTHR21015:SF22">
    <property type="entry name" value="GLYCOSYLTRANSFERASE"/>
    <property type="match status" value="1"/>
</dbReference>
<dbReference type="PANTHER" id="PTHR21015">
    <property type="entry name" value="UDP-N-ACETYLGLUCOSAMINE--N-ACETYLMURAMYL-(PENTAPEPTIDE) PYROPHOSPHORYL-UNDECAPRENOL N-ACETYLGLUCOSAMINE TRANSFERASE 1"/>
    <property type="match status" value="1"/>
</dbReference>
<dbReference type="Pfam" id="PF04101">
    <property type="entry name" value="Glyco_tran_28_C"/>
    <property type="match status" value="1"/>
</dbReference>
<dbReference type="Pfam" id="PF03033">
    <property type="entry name" value="Glyco_transf_28"/>
    <property type="match status" value="1"/>
</dbReference>
<dbReference type="SUPFAM" id="SSF53756">
    <property type="entry name" value="UDP-Glycosyltransferase/glycogen phosphorylase"/>
    <property type="match status" value="1"/>
</dbReference>
<protein>
    <recommendedName>
        <fullName evidence="1">UDP-N-acetylglucosamine--N-acetylmuramyl-(pentapeptide) pyrophosphoryl-undecaprenol N-acetylglucosamine transferase</fullName>
        <ecNumber evidence="1">2.4.1.227</ecNumber>
    </recommendedName>
    <alternativeName>
        <fullName evidence="1">Undecaprenyl-PP-MurNAc-pentapeptide-UDPGlcNAc GlcNAc transferase</fullName>
    </alternativeName>
</protein>
<reference key="1">
    <citation type="journal article" date="2005" name="Proc. Natl. Acad. Sci. U.S.A.">
        <title>Complete genome sequence of Vibrio fischeri: a symbiotic bacterium with pathogenic congeners.</title>
        <authorList>
            <person name="Ruby E.G."/>
            <person name="Urbanowski M."/>
            <person name="Campbell J."/>
            <person name="Dunn A."/>
            <person name="Faini M."/>
            <person name="Gunsalus R."/>
            <person name="Lostroh P."/>
            <person name="Lupp C."/>
            <person name="McCann J."/>
            <person name="Millikan D."/>
            <person name="Schaefer A."/>
            <person name="Stabb E."/>
            <person name="Stevens A."/>
            <person name="Visick K."/>
            <person name="Whistler C."/>
            <person name="Greenberg E.P."/>
        </authorList>
    </citation>
    <scope>NUCLEOTIDE SEQUENCE [LARGE SCALE GENOMIC DNA]</scope>
    <source>
        <strain>ATCC 700601 / ES114</strain>
    </source>
</reference>
<proteinExistence type="inferred from homology"/>